<reference key="1">
    <citation type="journal article" date="2001" name="Lancet">
        <title>Whole genome sequencing of meticillin-resistant Staphylococcus aureus.</title>
        <authorList>
            <person name="Kuroda M."/>
            <person name="Ohta T."/>
            <person name="Uchiyama I."/>
            <person name="Baba T."/>
            <person name="Yuzawa H."/>
            <person name="Kobayashi I."/>
            <person name="Cui L."/>
            <person name="Oguchi A."/>
            <person name="Aoki K."/>
            <person name="Nagai Y."/>
            <person name="Lian J.-Q."/>
            <person name="Ito T."/>
            <person name="Kanamori M."/>
            <person name="Matsumaru H."/>
            <person name="Maruyama A."/>
            <person name="Murakami H."/>
            <person name="Hosoyama A."/>
            <person name="Mizutani-Ui Y."/>
            <person name="Takahashi N.K."/>
            <person name="Sawano T."/>
            <person name="Inoue R."/>
            <person name="Kaito C."/>
            <person name="Sekimizu K."/>
            <person name="Hirakawa H."/>
            <person name="Kuhara S."/>
            <person name="Goto S."/>
            <person name="Yabuzaki J."/>
            <person name="Kanehisa M."/>
            <person name="Yamashita A."/>
            <person name="Oshima K."/>
            <person name="Furuya K."/>
            <person name="Yoshino C."/>
            <person name="Shiba T."/>
            <person name="Hattori M."/>
            <person name="Ogasawara N."/>
            <person name="Hayashi H."/>
            <person name="Hiramatsu K."/>
        </authorList>
    </citation>
    <scope>NUCLEOTIDE SEQUENCE [LARGE SCALE GENOMIC DNA]</scope>
    <source>
        <strain>N315</strain>
    </source>
</reference>
<reference key="2">
    <citation type="submission" date="2007-10" db="UniProtKB">
        <title>Shotgun proteomic analysis of total and membrane protein extracts of S. aureus strain N315.</title>
        <authorList>
            <person name="Vaezzadeh A.R."/>
            <person name="Deshusses J."/>
            <person name="Lescuyer P."/>
            <person name="Hochstrasser D.F."/>
        </authorList>
    </citation>
    <scope>IDENTIFICATION BY MASS SPECTROMETRY [LARGE SCALE ANALYSIS]</scope>
    <source>
        <strain>N315</strain>
    </source>
</reference>
<sequence>MATWLAIIFIVAALILGLIGGFLLARKYMMDYLKKNPPINEEMLRMMMMQMGQKPSQKKINQMMTMMNKNMDQNMKSAKK</sequence>
<proteinExistence type="evidence at protein level"/>
<gene>
    <name type="ordered locus">SA1178</name>
</gene>
<keyword id="KW-0472">Membrane</keyword>
<keyword id="KW-0812">Transmembrane</keyword>
<keyword id="KW-1133">Transmembrane helix</keyword>
<evidence type="ECO:0000255" key="1">
    <source>
        <dbReference type="HAMAP-Rule" id="MF_00363"/>
    </source>
</evidence>
<feature type="chain" id="PRO_0000214975" description="UPF0154 protein SA1178">
    <location>
        <begin position="1"/>
        <end position="80"/>
    </location>
</feature>
<feature type="transmembrane region" description="Helical" evidence="1">
    <location>
        <begin position="4"/>
        <end position="24"/>
    </location>
</feature>
<organism>
    <name type="scientific">Staphylococcus aureus (strain N315)</name>
    <dbReference type="NCBI Taxonomy" id="158879"/>
    <lineage>
        <taxon>Bacteria</taxon>
        <taxon>Bacillati</taxon>
        <taxon>Bacillota</taxon>
        <taxon>Bacilli</taxon>
        <taxon>Bacillales</taxon>
        <taxon>Staphylococcaceae</taxon>
        <taxon>Staphylococcus</taxon>
    </lineage>
</organism>
<dbReference type="EMBL" id="BA000018">
    <property type="protein sequence ID" value="BAB42436.1"/>
    <property type="molecule type" value="Genomic_DNA"/>
</dbReference>
<dbReference type="PIR" id="H89909">
    <property type="entry name" value="H89909"/>
</dbReference>
<dbReference type="RefSeq" id="WP_000246909.1">
    <property type="nucleotide sequence ID" value="NC_002745.2"/>
</dbReference>
<dbReference type="SMR" id="P67291"/>
<dbReference type="EnsemblBacteria" id="BAB42436">
    <property type="protein sequence ID" value="BAB42436"/>
    <property type="gene ID" value="BAB42436"/>
</dbReference>
<dbReference type="KEGG" id="sau:SA1178"/>
<dbReference type="HOGENOM" id="CLU_180108_0_1_9"/>
<dbReference type="GO" id="GO:0005886">
    <property type="term" value="C:plasma membrane"/>
    <property type="evidence" value="ECO:0007669"/>
    <property type="project" value="UniProtKB-UniRule"/>
</dbReference>
<dbReference type="Gene3D" id="1.10.238.10">
    <property type="entry name" value="EF-hand"/>
    <property type="match status" value="1"/>
</dbReference>
<dbReference type="HAMAP" id="MF_00363">
    <property type="entry name" value="UPF0154"/>
    <property type="match status" value="1"/>
</dbReference>
<dbReference type="InterPro" id="IPR011992">
    <property type="entry name" value="EF-hand-dom_pair"/>
</dbReference>
<dbReference type="InterPro" id="IPR005359">
    <property type="entry name" value="UPF0154"/>
</dbReference>
<dbReference type="Pfam" id="PF03672">
    <property type="entry name" value="UPF0154"/>
    <property type="match status" value="1"/>
</dbReference>
<dbReference type="SUPFAM" id="SSF47473">
    <property type="entry name" value="EF-hand"/>
    <property type="match status" value="1"/>
</dbReference>
<protein>
    <recommendedName>
        <fullName evidence="1">UPF0154 protein SA1178</fullName>
    </recommendedName>
</protein>
<comment type="subcellular location">
    <subcellularLocation>
        <location evidence="1">Membrane</location>
        <topology evidence="1">Single-pass membrane protein</topology>
    </subcellularLocation>
</comment>
<comment type="similarity">
    <text evidence="1">Belongs to the UPF0154 family.</text>
</comment>
<accession>P67291</accession>
<accession>Q99UD3</accession>
<name>Y1178_STAAN</name>